<reference key="1">
    <citation type="journal article" date="2007" name="J. Bacteriol.">
        <title>Genome sequence and analysis of the soil cellulolytic actinomycete Thermobifida fusca YX.</title>
        <authorList>
            <person name="Lykidis A."/>
            <person name="Mavromatis K."/>
            <person name="Ivanova N."/>
            <person name="Anderson I."/>
            <person name="Land M."/>
            <person name="DiBartolo G."/>
            <person name="Martinez M."/>
            <person name="Lapidus A."/>
            <person name="Lucas S."/>
            <person name="Copeland A."/>
            <person name="Richardson P."/>
            <person name="Wilson D.B."/>
            <person name="Kyrpides N."/>
        </authorList>
    </citation>
    <scope>NUCLEOTIDE SEQUENCE [LARGE SCALE GENOMIC DNA]</scope>
    <source>
        <strain>YX</strain>
    </source>
</reference>
<accession>Q47LI8</accession>
<proteinExistence type="inferred from homology"/>
<evidence type="ECO:0000250" key="1"/>
<evidence type="ECO:0000255" key="2">
    <source>
        <dbReference type="HAMAP-Rule" id="MF_00403"/>
    </source>
</evidence>
<evidence type="ECO:0000256" key="3">
    <source>
        <dbReference type="SAM" id="MobiDB-lite"/>
    </source>
</evidence>
<evidence type="ECO:0000305" key="4"/>
<feature type="chain" id="PRO_0000226420" description="Small ribosomal subunit protein uS12">
    <location>
        <begin position="1"/>
        <end position="123"/>
    </location>
</feature>
<feature type="region of interest" description="Disordered" evidence="3">
    <location>
        <begin position="1"/>
        <end position="32"/>
    </location>
</feature>
<feature type="compositionally biased region" description="Basic residues" evidence="3">
    <location>
        <begin position="9"/>
        <end position="18"/>
    </location>
</feature>
<feature type="modified residue" description="3-methylthioaspartic acid" evidence="1">
    <location>
        <position position="89"/>
    </location>
</feature>
<sequence length="123" mass="13783">MPTIQQLVRKGRKTKVSKNKTPALKGSPQRRGVCTRVYTTTPKKPNSALRKVARVRLSSQIEVTAYIPGVGHNLQEHSIVLVRGGRVKDLPGVRYRIVRGALDTQGVRNRKQARSRYGAKKEK</sequence>
<comment type="function">
    <text evidence="2">With S4 and S5 plays an important role in translational accuracy.</text>
</comment>
<comment type="function">
    <text evidence="2">Interacts with and stabilizes bases of the 16S rRNA that are involved in tRNA selection in the A site and with the mRNA backbone. Located at the interface of the 30S and 50S subunits, it traverses the body of the 30S subunit contacting proteins on the other side and probably holding the rRNA structure together. The combined cluster of proteins S8, S12 and S17 appears to hold together the shoulder and platform of the 30S subunit.</text>
</comment>
<comment type="subunit">
    <text evidence="2">Part of the 30S ribosomal subunit. Contacts proteins S8 and S17. May interact with IF1 in the 30S initiation complex.</text>
</comment>
<comment type="similarity">
    <text evidence="2">Belongs to the universal ribosomal protein uS12 family.</text>
</comment>
<protein>
    <recommendedName>
        <fullName evidence="2">Small ribosomal subunit protein uS12</fullName>
    </recommendedName>
    <alternativeName>
        <fullName evidence="4">30S ribosomal protein S12</fullName>
    </alternativeName>
</protein>
<gene>
    <name evidence="2" type="primary">rpsL</name>
    <name type="ordered locus">Tfu_2651</name>
</gene>
<name>RS12_THEFY</name>
<organism>
    <name type="scientific">Thermobifida fusca (strain YX)</name>
    <dbReference type="NCBI Taxonomy" id="269800"/>
    <lineage>
        <taxon>Bacteria</taxon>
        <taxon>Bacillati</taxon>
        <taxon>Actinomycetota</taxon>
        <taxon>Actinomycetes</taxon>
        <taxon>Streptosporangiales</taxon>
        <taxon>Nocardiopsidaceae</taxon>
        <taxon>Thermobifida</taxon>
    </lineage>
</organism>
<dbReference type="EMBL" id="CP000088">
    <property type="protein sequence ID" value="AAZ56684.1"/>
    <property type="molecule type" value="Genomic_DNA"/>
</dbReference>
<dbReference type="RefSeq" id="WP_011293074.1">
    <property type="nucleotide sequence ID" value="NC_007333.1"/>
</dbReference>
<dbReference type="SMR" id="Q47LI8"/>
<dbReference type="STRING" id="269800.Tfu_2651"/>
<dbReference type="KEGG" id="tfu:Tfu_2651"/>
<dbReference type="eggNOG" id="COG0048">
    <property type="taxonomic scope" value="Bacteria"/>
</dbReference>
<dbReference type="HOGENOM" id="CLU_104295_1_2_11"/>
<dbReference type="OrthoDB" id="9802366at2"/>
<dbReference type="GO" id="GO:0015935">
    <property type="term" value="C:small ribosomal subunit"/>
    <property type="evidence" value="ECO:0007669"/>
    <property type="project" value="InterPro"/>
</dbReference>
<dbReference type="GO" id="GO:0019843">
    <property type="term" value="F:rRNA binding"/>
    <property type="evidence" value="ECO:0007669"/>
    <property type="project" value="UniProtKB-UniRule"/>
</dbReference>
<dbReference type="GO" id="GO:0003735">
    <property type="term" value="F:structural constituent of ribosome"/>
    <property type="evidence" value="ECO:0007669"/>
    <property type="project" value="InterPro"/>
</dbReference>
<dbReference type="GO" id="GO:0000049">
    <property type="term" value="F:tRNA binding"/>
    <property type="evidence" value="ECO:0007669"/>
    <property type="project" value="UniProtKB-UniRule"/>
</dbReference>
<dbReference type="GO" id="GO:0006412">
    <property type="term" value="P:translation"/>
    <property type="evidence" value="ECO:0007669"/>
    <property type="project" value="UniProtKB-UniRule"/>
</dbReference>
<dbReference type="CDD" id="cd03368">
    <property type="entry name" value="Ribosomal_S12"/>
    <property type="match status" value="1"/>
</dbReference>
<dbReference type="FunFam" id="2.40.50.140:FF:000001">
    <property type="entry name" value="30S ribosomal protein S12"/>
    <property type="match status" value="1"/>
</dbReference>
<dbReference type="Gene3D" id="2.40.50.140">
    <property type="entry name" value="Nucleic acid-binding proteins"/>
    <property type="match status" value="1"/>
</dbReference>
<dbReference type="HAMAP" id="MF_00403_B">
    <property type="entry name" value="Ribosomal_uS12_B"/>
    <property type="match status" value="1"/>
</dbReference>
<dbReference type="InterPro" id="IPR012340">
    <property type="entry name" value="NA-bd_OB-fold"/>
</dbReference>
<dbReference type="InterPro" id="IPR006032">
    <property type="entry name" value="Ribosomal_uS12"/>
</dbReference>
<dbReference type="InterPro" id="IPR005679">
    <property type="entry name" value="Ribosomal_uS12_bac"/>
</dbReference>
<dbReference type="NCBIfam" id="TIGR00981">
    <property type="entry name" value="rpsL_bact"/>
    <property type="match status" value="1"/>
</dbReference>
<dbReference type="PANTHER" id="PTHR11652">
    <property type="entry name" value="30S RIBOSOMAL PROTEIN S12 FAMILY MEMBER"/>
    <property type="match status" value="1"/>
</dbReference>
<dbReference type="Pfam" id="PF00164">
    <property type="entry name" value="Ribosom_S12_S23"/>
    <property type="match status" value="1"/>
</dbReference>
<dbReference type="PIRSF" id="PIRSF002133">
    <property type="entry name" value="Ribosomal_S12/S23"/>
    <property type="match status" value="1"/>
</dbReference>
<dbReference type="PRINTS" id="PR01034">
    <property type="entry name" value="RIBOSOMALS12"/>
</dbReference>
<dbReference type="SUPFAM" id="SSF50249">
    <property type="entry name" value="Nucleic acid-binding proteins"/>
    <property type="match status" value="1"/>
</dbReference>
<dbReference type="PROSITE" id="PS00055">
    <property type="entry name" value="RIBOSOMAL_S12"/>
    <property type="match status" value="1"/>
</dbReference>
<keyword id="KW-0488">Methylation</keyword>
<keyword id="KW-0687">Ribonucleoprotein</keyword>
<keyword id="KW-0689">Ribosomal protein</keyword>
<keyword id="KW-0694">RNA-binding</keyword>
<keyword id="KW-0699">rRNA-binding</keyword>
<keyword id="KW-0820">tRNA-binding</keyword>